<protein>
    <recommendedName>
        <fullName>C-type lectin 13</fullName>
    </recommendedName>
</protein>
<dbReference type="EMBL" id="JU173628">
    <property type="protein sequence ID" value="AFJ49154.1"/>
    <property type="molecule type" value="mRNA"/>
</dbReference>
<dbReference type="SMR" id="J3RY43"/>
<dbReference type="GO" id="GO:0005576">
    <property type="term" value="C:extracellular region"/>
    <property type="evidence" value="ECO:0007669"/>
    <property type="project" value="UniProtKB-SubCell"/>
</dbReference>
<dbReference type="GO" id="GO:0030246">
    <property type="term" value="F:carbohydrate binding"/>
    <property type="evidence" value="ECO:0007669"/>
    <property type="project" value="UniProtKB-KW"/>
</dbReference>
<dbReference type="GO" id="GO:0090729">
    <property type="term" value="F:toxin activity"/>
    <property type="evidence" value="ECO:0007669"/>
    <property type="project" value="UniProtKB-KW"/>
</dbReference>
<dbReference type="FunFam" id="3.10.100.10:FF:000087">
    <property type="entry name" value="Snaclec rhodocetin subunit delta"/>
    <property type="match status" value="1"/>
</dbReference>
<dbReference type="Gene3D" id="3.10.100.10">
    <property type="entry name" value="Mannose-Binding Protein A, subunit A"/>
    <property type="match status" value="1"/>
</dbReference>
<dbReference type="InterPro" id="IPR001304">
    <property type="entry name" value="C-type_lectin-like"/>
</dbReference>
<dbReference type="InterPro" id="IPR016186">
    <property type="entry name" value="C-type_lectin-like/link_sf"/>
</dbReference>
<dbReference type="InterPro" id="IPR050111">
    <property type="entry name" value="C-type_lectin/snaclec_domain"/>
</dbReference>
<dbReference type="InterPro" id="IPR018378">
    <property type="entry name" value="C-type_lectin_CS"/>
</dbReference>
<dbReference type="InterPro" id="IPR016187">
    <property type="entry name" value="CTDL_fold"/>
</dbReference>
<dbReference type="PANTHER" id="PTHR22803">
    <property type="entry name" value="MANNOSE, PHOSPHOLIPASE, LECTIN RECEPTOR RELATED"/>
    <property type="match status" value="1"/>
</dbReference>
<dbReference type="Pfam" id="PF00059">
    <property type="entry name" value="Lectin_C"/>
    <property type="match status" value="1"/>
</dbReference>
<dbReference type="SMART" id="SM00034">
    <property type="entry name" value="CLECT"/>
    <property type="match status" value="1"/>
</dbReference>
<dbReference type="SUPFAM" id="SSF56436">
    <property type="entry name" value="C-type lectin-like"/>
    <property type="match status" value="1"/>
</dbReference>
<dbReference type="PROSITE" id="PS00615">
    <property type="entry name" value="C_TYPE_LECTIN_1"/>
    <property type="match status" value="1"/>
</dbReference>
<dbReference type="PROSITE" id="PS50041">
    <property type="entry name" value="C_TYPE_LECTIN_2"/>
    <property type="match status" value="1"/>
</dbReference>
<name>SLD_CROAD</name>
<reference key="1">
    <citation type="journal article" date="2012" name="BMC Genomics">
        <title>The venom-gland transcriptome of the eastern diamondback rattlesnake (Crotalus adamanteus).</title>
        <authorList>
            <person name="Rokyta D.R."/>
            <person name="Lemmon A.R."/>
            <person name="Margres M.J."/>
            <person name="Aronow K."/>
        </authorList>
    </citation>
    <scope>NUCLEOTIDE SEQUENCE [MRNA]</scope>
    <source>
        <tissue>Venom gland</tissue>
    </source>
</reference>
<reference key="2">
    <citation type="journal article" date="2014" name="J. Proteomics">
        <title>Linking the transcriptome and proteome to characterize the venom of the eastern diamondback rattlesnake (Crotalus adamanteus).</title>
        <authorList>
            <person name="Margres M.J."/>
            <person name="McGivern J.J."/>
            <person name="Wray K.P."/>
            <person name="Seavy M."/>
            <person name="Calvin K."/>
            <person name="Rokyta D.R."/>
        </authorList>
    </citation>
    <scope>IDENTIFICATION BY MASS SPECTROMETRY</scope>
    <source>
        <tissue>Venom</tissue>
    </source>
</reference>
<feature type="signal peptide" evidence="1">
    <location>
        <begin position="1"/>
        <end position="23"/>
    </location>
</feature>
<feature type="chain" id="PRO_0000425656" description="C-type lectin 13">
    <location>
        <begin position="24"/>
        <end position="142"/>
    </location>
</feature>
<feature type="domain" description="C-type lectin" evidence="2">
    <location>
        <begin position="32"/>
        <end position="139"/>
    </location>
</feature>
<feature type="disulfide bond" evidence="2">
    <location>
        <begin position="25"/>
        <end position="36"/>
    </location>
</feature>
<feature type="disulfide bond" evidence="2">
    <location>
        <begin position="53"/>
        <end position="138"/>
    </location>
</feature>
<feature type="disulfide bond" evidence="2">
    <location>
        <begin position="115"/>
        <end position="130"/>
    </location>
</feature>
<accession>J3RY43</accession>
<organism>
    <name type="scientific">Crotalus adamanteus</name>
    <name type="common">Eastern diamondback rattlesnake</name>
    <dbReference type="NCBI Taxonomy" id="8729"/>
    <lineage>
        <taxon>Eukaryota</taxon>
        <taxon>Metazoa</taxon>
        <taxon>Chordata</taxon>
        <taxon>Craniata</taxon>
        <taxon>Vertebrata</taxon>
        <taxon>Euteleostomi</taxon>
        <taxon>Lepidosauria</taxon>
        <taxon>Squamata</taxon>
        <taxon>Bifurcata</taxon>
        <taxon>Unidentata</taxon>
        <taxon>Episquamata</taxon>
        <taxon>Toxicofera</taxon>
        <taxon>Serpentes</taxon>
        <taxon>Colubroidea</taxon>
        <taxon>Viperidae</taxon>
        <taxon>Crotalinae</taxon>
        <taxon>Crotalus</taxon>
    </lineage>
</organism>
<sequence length="142" mass="16618">MGRLVFVSFGGWDVFLSLSGTGADCPSDWSSYEGHCYRVFQQEMTWEAAEKFCTQQHQKSHPVYFRSSEEVDFLVSILKFDLFWMGWRDIWNERRLQWSDGTKVNYKAWSAEPECVVCRATDNQWLSTSCSKTHNVVCKFQA</sequence>
<comment type="function">
    <text evidence="1">Interferes with one step of hemostasis (modulation of platelet aggregation, or coagulation cascade, for example).</text>
</comment>
<comment type="subunit">
    <text evidence="1">Heteromultimer; disulfide-linked.</text>
</comment>
<comment type="subcellular location">
    <subcellularLocation>
        <location>Secreted</location>
    </subcellularLocation>
</comment>
<comment type="tissue specificity">
    <text>Expressed by the venom gland.</text>
</comment>
<comment type="similarity">
    <text evidence="3">Belongs to the snaclec family.</text>
</comment>
<proteinExistence type="evidence at protein level"/>
<keyword id="KW-1015">Disulfide bond</keyword>
<keyword id="KW-1199">Hemostasis impairing toxin</keyword>
<keyword id="KW-0430">Lectin</keyword>
<keyword id="KW-0964">Secreted</keyword>
<keyword id="KW-0732">Signal</keyword>
<keyword id="KW-0800">Toxin</keyword>
<evidence type="ECO:0000250" key="1"/>
<evidence type="ECO:0000255" key="2">
    <source>
        <dbReference type="PROSITE-ProRule" id="PRU00040"/>
    </source>
</evidence>
<evidence type="ECO:0000305" key="3"/>